<protein>
    <recommendedName>
        <fullName evidence="1">Pole-localizer protein TmaR</fullName>
    </recommendedName>
</protein>
<sequence>METTKPSFQDVLEFVRLFRRKNKLQREIQDIEKKIRDNQKRVLLLDNLSDYIKPGMSVEAIQGIIASMKSDYEDRVDDYIIKNAEISKERRDISKKLKAMGEMKHADVKAE</sequence>
<name>TMAR_SALDC</name>
<comment type="function">
    <text evidence="1">Pole-localizer protein involved in the regulation of several cellular processes.</text>
</comment>
<comment type="subcellular location">
    <subcellularLocation>
        <location evidence="1">Cytoplasm</location>
    </subcellularLocation>
    <text evidence="1">Forms clusters that localize mainly near one pole of the cell.</text>
</comment>
<comment type="similarity">
    <text evidence="1">Belongs to the pole-localizer TmaR family.</text>
</comment>
<dbReference type="EMBL" id="CP001144">
    <property type="protein sequence ID" value="ACH73749.1"/>
    <property type="molecule type" value="Genomic_DNA"/>
</dbReference>
<dbReference type="RefSeq" id="WP_000450405.1">
    <property type="nucleotide sequence ID" value="NC_011205.1"/>
</dbReference>
<dbReference type="SMR" id="B5FM27"/>
<dbReference type="KEGG" id="sed:SeD_A2395"/>
<dbReference type="HOGENOM" id="CLU_153146_0_0_6"/>
<dbReference type="Proteomes" id="UP000008322">
    <property type="component" value="Chromosome"/>
</dbReference>
<dbReference type="GO" id="GO:0005829">
    <property type="term" value="C:cytosol"/>
    <property type="evidence" value="ECO:0007669"/>
    <property type="project" value="TreeGrafter"/>
</dbReference>
<dbReference type="HAMAP" id="MF_00683">
    <property type="entry name" value="Pole_loc_TmaR"/>
    <property type="match status" value="1"/>
</dbReference>
<dbReference type="InterPro" id="IPR007458">
    <property type="entry name" value="DUF496"/>
</dbReference>
<dbReference type="InterPro" id="IPR053375">
    <property type="entry name" value="UPF0265"/>
</dbReference>
<dbReference type="NCBIfam" id="NF003844">
    <property type="entry name" value="PRK05423.1"/>
    <property type="match status" value="1"/>
</dbReference>
<dbReference type="NCBIfam" id="NF040881">
    <property type="entry name" value="PTS_reg_TmaR"/>
    <property type="match status" value="1"/>
</dbReference>
<dbReference type="PANTHER" id="PTHR39591">
    <property type="entry name" value="UPF0265 PROTEIN YEEX"/>
    <property type="match status" value="1"/>
</dbReference>
<dbReference type="PANTHER" id="PTHR39591:SF1">
    <property type="entry name" value="UPF0265 PROTEIN YEEX"/>
    <property type="match status" value="1"/>
</dbReference>
<dbReference type="Pfam" id="PF04363">
    <property type="entry name" value="DUF496"/>
    <property type="match status" value="1"/>
</dbReference>
<dbReference type="PIRSF" id="PIRSF028773">
    <property type="entry name" value="UCP028773"/>
    <property type="match status" value="1"/>
</dbReference>
<keyword id="KW-0175">Coiled coil</keyword>
<keyword id="KW-0963">Cytoplasm</keyword>
<accession>B5FM27</accession>
<organism>
    <name type="scientific">Salmonella dublin (strain CT_02021853)</name>
    <dbReference type="NCBI Taxonomy" id="439851"/>
    <lineage>
        <taxon>Bacteria</taxon>
        <taxon>Pseudomonadati</taxon>
        <taxon>Pseudomonadota</taxon>
        <taxon>Gammaproteobacteria</taxon>
        <taxon>Enterobacterales</taxon>
        <taxon>Enterobacteriaceae</taxon>
        <taxon>Salmonella</taxon>
    </lineage>
</organism>
<gene>
    <name evidence="1" type="primary">tmaR</name>
    <name type="ordered locus">SeD_A2395</name>
</gene>
<feature type="chain" id="PRO_1000131772" description="Pole-localizer protein TmaR">
    <location>
        <begin position="1"/>
        <end position="111"/>
    </location>
</feature>
<feature type="coiled-coil region" evidence="1">
    <location>
        <begin position="14"/>
        <end position="41"/>
    </location>
</feature>
<evidence type="ECO:0000255" key="1">
    <source>
        <dbReference type="HAMAP-Rule" id="MF_00683"/>
    </source>
</evidence>
<proteinExistence type="inferred from homology"/>
<reference key="1">
    <citation type="journal article" date="2011" name="J. Bacteriol.">
        <title>Comparative genomics of 28 Salmonella enterica isolates: evidence for CRISPR-mediated adaptive sublineage evolution.</title>
        <authorList>
            <person name="Fricke W.F."/>
            <person name="Mammel M.K."/>
            <person name="McDermott P.F."/>
            <person name="Tartera C."/>
            <person name="White D.G."/>
            <person name="Leclerc J.E."/>
            <person name="Ravel J."/>
            <person name="Cebula T.A."/>
        </authorList>
    </citation>
    <scope>NUCLEOTIDE SEQUENCE [LARGE SCALE GENOMIC DNA]</scope>
    <source>
        <strain>CT_02021853</strain>
    </source>
</reference>